<keyword id="KW-1185">Reference proteome</keyword>
<keyword id="KW-0732">Signal</keyword>
<feature type="signal peptide" evidence="1">
    <location>
        <begin position="1"/>
        <end position="20"/>
    </location>
</feature>
<feature type="chain" id="PRO_0000036294" description="UPF0319 protein YccT">
    <location>
        <begin position="21"/>
        <end position="220"/>
    </location>
</feature>
<evidence type="ECO:0000255" key="1"/>
<evidence type="ECO:0000305" key="2"/>
<accession>P0A8X4</accession>
<accession>P75873</accession>
<gene>
    <name type="primary">yccT</name>
    <name type="ordered locus">b0964</name>
    <name type="ordered locus">JW0947</name>
</gene>
<name>YCCT_ECOLI</name>
<reference key="1">
    <citation type="journal article" date="1996" name="DNA Res.">
        <title>A 718-kb DNA sequence of the Escherichia coli K-12 genome corresponding to the 12.7-28.0 min region on the linkage map.</title>
        <authorList>
            <person name="Oshima T."/>
            <person name="Aiba H."/>
            <person name="Baba T."/>
            <person name="Fujita K."/>
            <person name="Hayashi K."/>
            <person name="Honjo A."/>
            <person name="Ikemoto K."/>
            <person name="Inada T."/>
            <person name="Itoh T."/>
            <person name="Kajihara M."/>
            <person name="Kanai K."/>
            <person name="Kashimoto K."/>
            <person name="Kimura S."/>
            <person name="Kitagawa M."/>
            <person name="Makino K."/>
            <person name="Masuda S."/>
            <person name="Miki T."/>
            <person name="Mizobuchi K."/>
            <person name="Mori H."/>
            <person name="Motomura K."/>
            <person name="Nakamura Y."/>
            <person name="Nashimoto H."/>
            <person name="Nishio Y."/>
            <person name="Saito N."/>
            <person name="Sampei G."/>
            <person name="Seki Y."/>
            <person name="Tagami H."/>
            <person name="Takemoto K."/>
            <person name="Wada C."/>
            <person name="Yamamoto Y."/>
            <person name="Yano M."/>
            <person name="Horiuchi T."/>
        </authorList>
    </citation>
    <scope>NUCLEOTIDE SEQUENCE [LARGE SCALE GENOMIC DNA]</scope>
    <source>
        <strain>K12 / W3110 / ATCC 27325 / DSM 5911</strain>
    </source>
</reference>
<reference key="2">
    <citation type="journal article" date="1997" name="Science">
        <title>The complete genome sequence of Escherichia coli K-12.</title>
        <authorList>
            <person name="Blattner F.R."/>
            <person name="Plunkett G. III"/>
            <person name="Bloch C.A."/>
            <person name="Perna N.T."/>
            <person name="Burland V."/>
            <person name="Riley M."/>
            <person name="Collado-Vides J."/>
            <person name="Glasner J.D."/>
            <person name="Rode C.K."/>
            <person name="Mayhew G.F."/>
            <person name="Gregor J."/>
            <person name="Davis N.W."/>
            <person name="Kirkpatrick H.A."/>
            <person name="Goeden M.A."/>
            <person name="Rose D.J."/>
            <person name="Mau B."/>
            <person name="Shao Y."/>
        </authorList>
    </citation>
    <scope>NUCLEOTIDE SEQUENCE [LARGE SCALE GENOMIC DNA]</scope>
    <source>
        <strain>K12 / MG1655 / ATCC 47076</strain>
    </source>
</reference>
<reference key="3">
    <citation type="journal article" date="2006" name="Mol. Syst. Biol.">
        <title>Highly accurate genome sequences of Escherichia coli K-12 strains MG1655 and W3110.</title>
        <authorList>
            <person name="Hayashi K."/>
            <person name="Morooka N."/>
            <person name="Yamamoto Y."/>
            <person name="Fujita K."/>
            <person name="Isono K."/>
            <person name="Choi S."/>
            <person name="Ohtsubo E."/>
            <person name="Baba T."/>
            <person name="Wanner B.L."/>
            <person name="Mori H."/>
            <person name="Horiuchi T."/>
        </authorList>
    </citation>
    <scope>NUCLEOTIDE SEQUENCE [LARGE SCALE GENOMIC DNA]</scope>
    <source>
        <strain>K12 / W3110 / ATCC 27325 / DSM 5911</strain>
    </source>
</reference>
<sequence>MKTGIVTTLIALCLPVSVFATTLRLSTDVDLLVLDGKKVSSSLLRGADSIELDNGPHQLVFRVEKTIHLSNSEERLYISPPLVVSFNTQLINQVNFRLPRLENEREANHFDAAPRLELLDGDATPIPVKLDILAITSTAKTIDYEVEVERYNKSAKRASLPQFATMMADDSTLLSGVSELDAIPPQSQVLTEQRLKYWFKLADPQTRNTFLQWAEKQPSS</sequence>
<proteinExistence type="inferred from homology"/>
<organism>
    <name type="scientific">Escherichia coli (strain K12)</name>
    <dbReference type="NCBI Taxonomy" id="83333"/>
    <lineage>
        <taxon>Bacteria</taxon>
        <taxon>Pseudomonadati</taxon>
        <taxon>Pseudomonadota</taxon>
        <taxon>Gammaproteobacteria</taxon>
        <taxon>Enterobacterales</taxon>
        <taxon>Enterobacteriaceae</taxon>
        <taxon>Escherichia</taxon>
    </lineage>
</organism>
<protein>
    <recommendedName>
        <fullName>UPF0319 protein YccT</fullName>
    </recommendedName>
</protein>
<dbReference type="EMBL" id="U00096">
    <property type="protein sequence ID" value="AAC74050.1"/>
    <property type="molecule type" value="Genomic_DNA"/>
</dbReference>
<dbReference type="EMBL" id="AP009048">
    <property type="protein sequence ID" value="BAA35729.1"/>
    <property type="molecule type" value="Genomic_DNA"/>
</dbReference>
<dbReference type="PIR" id="C64837">
    <property type="entry name" value="C64837"/>
</dbReference>
<dbReference type="RefSeq" id="NP_415484.1">
    <property type="nucleotide sequence ID" value="NC_000913.3"/>
</dbReference>
<dbReference type="RefSeq" id="WP_000847791.1">
    <property type="nucleotide sequence ID" value="NZ_STEB01000006.1"/>
</dbReference>
<dbReference type="BioGRID" id="4260033">
    <property type="interactions" value="2"/>
</dbReference>
<dbReference type="BioGRID" id="849951">
    <property type="interactions" value="4"/>
</dbReference>
<dbReference type="FunCoup" id="P0A8X4">
    <property type="interactions" value="136"/>
</dbReference>
<dbReference type="IntAct" id="P0A8X4">
    <property type="interactions" value="5"/>
</dbReference>
<dbReference type="STRING" id="511145.b0964"/>
<dbReference type="PaxDb" id="511145-b0964"/>
<dbReference type="EnsemblBacteria" id="AAC74050">
    <property type="protein sequence ID" value="AAC74050"/>
    <property type="gene ID" value="b0964"/>
</dbReference>
<dbReference type="GeneID" id="945577"/>
<dbReference type="KEGG" id="ecj:JW0947"/>
<dbReference type="KEGG" id="eco:b0964"/>
<dbReference type="KEGG" id="ecoc:C3026_05890"/>
<dbReference type="PATRIC" id="fig|511145.12.peg.998"/>
<dbReference type="EchoBASE" id="EB3486"/>
<dbReference type="eggNOG" id="COG3110">
    <property type="taxonomic scope" value="Bacteria"/>
</dbReference>
<dbReference type="HOGENOM" id="CLU_073782_2_0_6"/>
<dbReference type="InParanoid" id="P0A8X4"/>
<dbReference type="OMA" id="MQIGRDY"/>
<dbReference type="OrthoDB" id="6428208at2"/>
<dbReference type="PhylomeDB" id="P0A8X4"/>
<dbReference type="BioCyc" id="EcoCyc:G6498-MONOMER"/>
<dbReference type="PRO" id="PR:P0A8X4"/>
<dbReference type="Proteomes" id="UP000000625">
    <property type="component" value="Chromosome"/>
</dbReference>
<dbReference type="GO" id="GO:0030288">
    <property type="term" value="C:outer membrane-bounded periplasmic space"/>
    <property type="evidence" value="ECO:0000314"/>
    <property type="project" value="EcoCyc"/>
</dbReference>
<dbReference type="HAMAP" id="MF_00789">
    <property type="entry name" value="UPF0319"/>
    <property type="match status" value="1"/>
</dbReference>
<dbReference type="InterPro" id="IPR018635">
    <property type="entry name" value="UPF0319"/>
</dbReference>
<dbReference type="NCBIfam" id="NF047712">
    <property type="entry name" value="CrliSynInhib"/>
    <property type="match status" value="1"/>
</dbReference>
<dbReference type="NCBIfam" id="NF002967">
    <property type="entry name" value="PRK03641.1"/>
    <property type="match status" value="1"/>
</dbReference>
<dbReference type="PANTHER" id="PTHR38108">
    <property type="entry name" value="UPF0319 PROTEIN YCCT"/>
    <property type="match status" value="1"/>
</dbReference>
<dbReference type="PANTHER" id="PTHR38108:SF1">
    <property type="entry name" value="UPF0319 PROTEIN YCCT"/>
    <property type="match status" value="1"/>
</dbReference>
<dbReference type="Pfam" id="PF09829">
    <property type="entry name" value="DUF2057"/>
    <property type="match status" value="1"/>
</dbReference>
<comment type="similarity">
    <text evidence="2">Belongs to the UPF0319 family.</text>
</comment>